<feature type="chain" id="PRO_0000428455" description="tRNA (guanine-N(1)-)-methyltransferase">
    <location>
        <begin position="1"/>
        <end position="230"/>
    </location>
</feature>
<feature type="binding site" evidence="1">
    <location>
        <position position="109"/>
    </location>
    <ligand>
        <name>S-adenosyl-L-methionine</name>
        <dbReference type="ChEBI" id="CHEBI:59789"/>
    </ligand>
</feature>
<feature type="binding site" evidence="1">
    <location>
        <begin position="133"/>
        <end position="138"/>
    </location>
    <ligand>
        <name>S-adenosyl-L-methionine</name>
        <dbReference type="ChEBI" id="CHEBI:59789"/>
    </ligand>
</feature>
<sequence>MRIDIVTIFPACLDPLRQSLPGKAIESGLVDLNVHDLRRWTHDVHHSVDDAPYGGGPGMVMKAPVWGEALDEICSSETLLIVPTPAGVLFTQATAQRWTTESHLVFACGRYEGIDQRVVQDAARRMRVEEVSIGDYVLPGGESAAVVMVEAVLRLLAGVLGNPASHQDDSHSTGLDGLLEGPSYTRPASWRGLDVPEVLLSGDHARIAAWRREVSLQRTRERRPDLSHPD</sequence>
<dbReference type="EC" id="2.1.1.228"/>
<dbReference type="EMBL" id="AE000516">
    <property type="protein sequence ID" value="AAK47300.1"/>
    <property type="molecule type" value="Genomic_DNA"/>
</dbReference>
<dbReference type="PIR" id="E70927">
    <property type="entry name" value="E70927"/>
</dbReference>
<dbReference type="RefSeq" id="WP_003414722.1">
    <property type="nucleotide sequence ID" value="NZ_KK341227.1"/>
</dbReference>
<dbReference type="SMR" id="P9WFY6"/>
<dbReference type="KEGG" id="mtc:MT2974"/>
<dbReference type="PATRIC" id="fig|83331.31.peg.3214"/>
<dbReference type="HOGENOM" id="CLU_047363_0_0_11"/>
<dbReference type="Proteomes" id="UP000001020">
    <property type="component" value="Chromosome"/>
</dbReference>
<dbReference type="GO" id="GO:0005829">
    <property type="term" value="C:cytosol"/>
    <property type="evidence" value="ECO:0007669"/>
    <property type="project" value="TreeGrafter"/>
</dbReference>
<dbReference type="GO" id="GO:0052906">
    <property type="term" value="F:tRNA (guanine(37)-N1)-methyltransferase activity"/>
    <property type="evidence" value="ECO:0007669"/>
    <property type="project" value="UniProtKB-UniRule"/>
</dbReference>
<dbReference type="GO" id="GO:0002939">
    <property type="term" value="P:tRNA N1-guanine methylation"/>
    <property type="evidence" value="ECO:0007669"/>
    <property type="project" value="TreeGrafter"/>
</dbReference>
<dbReference type="CDD" id="cd18080">
    <property type="entry name" value="TrmD-like"/>
    <property type="match status" value="1"/>
</dbReference>
<dbReference type="FunFam" id="1.10.1270.20:FF:000004">
    <property type="entry name" value="tRNA (guanine-N(1)-)-methyltransferase"/>
    <property type="match status" value="1"/>
</dbReference>
<dbReference type="FunFam" id="3.40.1280.10:FF:000001">
    <property type="entry name" value="tRNA (guanine-N(1)-)-methyltransferase"/>
    <property type="match status" value="1"/>
</dbReference>
<dbReference type="Gene3D" id="3.40.1280.10">
    <property type="match status" value="1"/>
</dbReference>
<dbReference type="Gene3D" id="1.10.1270.20">
    <property type="entry name" value="tRNA(m1g37)methyltransferase, domain 2"/>
    <property type="match status" value="1"/>
</dbReference>
<dbReference type="HAMAP" id="MF_00605">
    <property type="entry name" value="TrmD"/>
    <property type="match status" value="1"/>
</dbReference>
<dbReference type="InterPro" id="IPR029028">
    <property type="entry name" value="Alpha/beta_knot_MTases"/>
</dbReference>
<dbReference type="InterPro" id="IPR023148">
    <property type="entry name" value="tRNA_m1G_MeTrfase_C_sf"/>
</dbReference>
<dbReference type="InterPro" id="IPR002649">
    <property type="entry name" value="tRNA_m1G_MeTrfase_TrmD"/>
</dbReference>
<dbReference type="InterPro" id="IPR029026">
    <property type="entry name" value="tRNA_m1G_MTases_N"/>
</dbReference>
<dbReference type="InterPro" id="IPR016009">
    <property type="entry name" value="tRNA_MeTrfase_TRMD/TRM10"/>
</dbReference>
<dbReference type="NCBIfam" id="NF000648">
    <property type="entry name" value="PRK00026.1"/>
    <property type="match status" value="1"/>
</dbReference>
<dbReference type="NCBIfam" id="TIGR00088">
    <property type="entry name" value="trmD"/>
    <property type="match status" value="1"/>
</dbReference>
<dbReference type="PANTHER" id="PTHR46417">
    <property type="entry name" value="TRNA (GUANINE-N(1)-)-METHYLTRANSFERASE"/>
    <property type="match status" value="1"/>
</dbReference>
<dbReference type="PANTHER" id="PTHR46417:SF1">
    <property type="entry name" value="TRNA (GUANINE-N(1)-)-METHYLTRANSFERASE"/>
    <property type="match status" value="1"/>
</dbReference>
<dbReference type="Pfam" id="PF01746">
    <property type="entry name" value="tRNA_m1G_MT"/>
    <property type="match status" value="1"/>
</dbReference>
<dbReference type="PIRSF" id="PIRSF000386">
    <property type="entry name" value="tRNA_mtase"/>
    <property type="match status" value="1"/>
</dbReference>
<dbReference type="SUPFAM" id="SSF75217">
    <property type="entry name" value="alpha/beta knot"/>
    <property type="match status" value="1"/>
</dbReference>
<accession>P9WFY6</accession>
<accession>L0TDQ6</accession>
<accession>P66968</accession>
<accession>Q10797</accession>
<protein>
    <recommendedName>
        <fullName>tRNA (guanine-N(1)-)-methyltransferase</fullName>
        <ecNumber>2.1.1.228</ecNumber>
    </recommendedName>
    <alternativeName>
        <fullName>M1G-methyltransferase</fullName>
    </alternativeName>
    <alternativeName>
        <fullName>tRNA [GM37] methyltransferase</fullName>
    </alternativeName>
</protein>
<name>TRMD_MYCTO</name>
<reference key="1">
    <citation type="journal article" date="2002" name="J. Bacteriol.">
        <title>Whole-genome comparison of Mycobacterium tuberculosis clinical and laboratory strains.</title>
        <authorList>
            <person name="Fleischmann R.D."/>
            <person name="Alland D."/>
            <person name="Eisen J.A."/>
            <person name="Carpenter L."/>
            <person name="White O."/>
            <person name="Peterson J.D."/>
            <person name="DeBoy R.T."/>
            <person name="Dodson R.J."/>
            <person name="Gwinn M.L."/>
            <person name="Haft D.H."/>
            <person name="Hickey E.K."/>
            <person name="Kolonay J.F."/>
            <person name="Nelson W.C."/>
            <person name="Umayam L.A."/>
            <person name="Ermolaeva M.D."/>
            <person name="Salzberg S.L."/>
            <person name="Delcher A."/>
            <person name="Utterback T.R."/>
            <person name="Weidman J.F."/>
            <person name="Khouri H.M."/>
            <person name="Gill J."/>
            <person name="Mikula A."/>
            <person name="Bishai W."/>
            <person name="Jacobs W.R. Jr."/>
            <person name="Venter J.C."/>
            <person name="Fraser C.M."/>
        </authorList>
    </citation>
    <scope>NUCLEOTIDE SEQUENCE [LARGE SCALE GENOMIC DNA]</scope>
    <source>
        <strain>CDC 1551 / Oshkosh</strain>
    </source>
</reference>
<gene>
    <name type="primary">trmD</name>
    <name type="ordered locus">MT2974</name>
</gene>
<proteinExistence type="inferred from homology"/>
<evidence type="ECO:0000250" key="1"/>
<evidence type="ECO:0000305" key="2"/>
<keyword id="KW-0963">Cytoplasm</keyword>
<keyword id="KW-0489">Methyltransferase</keyword>
<keyword id="KW-1185">Reference proteome</keyword>
<keyword id="KW-0949">S-adenosyl-L-methionine</keyword>
<keyword id="KW-0808">Transferase</keyword>
<keyword id="KW-0819">tRNA processing</keyword>
<comment type="function">
    <text evidence="1">Specifically methylates guanosine-37 in various tRNAs.</text>
</comment>
<comment type="catalytic activity">
    <reaction>
        <text>guanosine(37) in tRNA + S-adenosyl-L-methionine = N(1)-methylguanosine(37) in tRNA + S-adenosyl-L-homocysteine + H(+)</text>
        <dbReference type="Rhea" id="RHEA:36899"/>
        <dbReference type="Rhea" id="RHEA-COMP:10145"/>
        <dbReference type="Rhea" id="RHEA-COMP:10147"/>
        <dbReference type="ChEBI" id="CHEBI:15378"/>
        <dbReference type="ChEBI" id="CHEBI:57856"/>
        <dbReference type="ChEBI" id="CHEBI:59789"/>
        <dbReference type="ChEBI" id="CHEBI:73542"/>
        <dbReference type="ChEBI" id="CHEBI:74269"/>
        <dbReference type="EC" id="2.1.1.228"/>
    </reaction>
</comment>
<comment type="subunit">
    <text evidence="1">Homodimer.</text>
</comment>
<comment type="subcellular location">
    <subcellularLocation>
        <location evidence="2">Cytoplasm</location>
    </subcellularLocation>
</comment>
<comment type="similarity">
    <text evidence="2">Belongs to the RNA methyltransferase TrmD family.</text>
</comment>
<organism>
    <name type="scientific">Mycobacterium tuberculosis (strain CDC 1551 / Oshkosh)</name>
    <dbReference type="NCBI Taxonomy" id="83331"/>
    <lineage>
        <taxon>Bacteria</taxon>
        <taxon>Bacillati</taxon>
        <taxon>Actinomycetota</taxon>
        <taxon>Actinomycetes</taxon>
        <taxon>Mycobacteriales</taxon>
        <taxon>Mycobacteriaceae</taxon>
        <taxon>Mycobacterium</taxon>
        <taxon>Mycobacterium tuberculosis complex</taxon>
    </lineage>
</organism>